<reference key="1">
    <citation type="journal article" date="2008" name="Mol. Cell. Proteomics">
        <title>Evolution of an arsenal: structural and functional diversification of the venom system in the advanced snakes (Caenophidia).</title>
        <authorList>
            <person name="Fry B.G."/>
            <person name="Scheib H."/>
            <person name="van der Weerd L."/>
            <person name="Young B."/>
            <person name="McNaughtan J."/>
            <person name="Ramjan S.F.R."/>
            <person name="Vidal N."/>
            <person name="Poelmann R.E."/>
            <person name="Norman J.A."/>
        </authorList>
    </citation>
    <scope>NUCLEOTIDE SEQUENCE [MRNA]</scope>
    <source>
        <tissue>Venom gland</tissue>
    </source>
</reference>
<accession>A7X401</accession>
<evidence type="ECO:0000250" key="1"/>
<evidence type="ECO:0000255" key="2"/>
<evidence type="ECO:0000255" key="3">
    <source>
        <dbReference type="PROSITE-ProRule" id="PRU00040"/>
    </source>
</evidence>
<evidence type="ECO:0000305" key="4"/>
<feature type="signal peptide" evidence="2">
    <location>
        <begin position="1"/>
        <end position="23"/>
    </location>
</feature>
<feature type="chain" id="PRO_0000355279" description="C-type lectin lectoxin-Lei1">
    <location>
        <begin position="24"/>
        <end position="156"/>
    </location>
</feature>
<feature type="domain" description="C-type lectin" evidence="3">
    <location>
        <begin position="34"/>
        <end position="155"/>
    </location>
</feature>
<feature type="short sequence motif" description="Sugar-binding">
    <location>
        <begin position="119"/>
        <end position="121"/>
    </location>
</feature>
<feature type="binding site" evidence="1">
    <location>
        <position position="142"/>
    </location>
    <ligand>
        <name>Ca(2+)</name>
        <dbReference type="ChEBI" id="CHEBI:29108"/>
    </ligand>
</feature>
<feature type="glycosylation site" description="N-linked (GlcNAc...) asparagine" evidence="2">
    <location>
        <position position="60"/>
    </location>
</feature>
<feature type="glycosylation site" description="N-linked (GlcNAc...) asparagine" evidence="2">
    <location>
        <position position="99"/>
    </location>
</feature>
<feature type="disulfide bond" evidence="3">
    <location>
        <begin position="27"/>
        <end position="38"/>
    </location>
</feature>
<feature type="disulfide bond" evidence="3">
    <location>
        <begin position="55"/>
        <end position="154"/>
    </location>
</feature>
<feature type="disulfide bond" evidence="3">
    <location>
        <begin position="129"/>
        <end position="146"/>
    </location>
</feature>
<dbReference type="EMBL" id="EU029699">
    <property type="protein sequence ID" value="ABU68499.1"/>
    <property type="molecule type" value="mRNA"/>
</dbReference>
<dbReference type="SMR" id="A7X401"/>
<dbReference type="GO" id="GO:0005576">
    <property type="term" value="C:extracellular region"/>
    <property type="evidence" value="ECO:0007669"/>
    <property type="project" value="UniProtKB-SubCell"/>
</dbReference>
<dbReference type="GO" id="GO:0030246">
    <property type="term" value="F:carbohydrate binding"/>
    <property type="evidence" value="ECO:0007669"/>
    <property type="project" value="UniProtKB-KW"/>
</dbReference>
<dbReference type="GO" id="GO:0046872">
    <property type="term" value="F:metal ion binding"/>
    <property type="evidence" value="ECO:0007669"/>
    <property type="project" value="UniProtKB-KW"/>
</dbReference>
<dbReference type="FunFam" id="3.10.100.10:FF:000087">
    <property type="entry name" value="Snaclec rhodocetin subunit delta"/>
    <property type="match status" value="1"/>
</dbReference>
<dbReference type="Gene3D" id="3.10.100.10">
    <property type="entry name" value="Mannose-Binding Protein A, subunit A"/>
    <property type="match status" value="1"/>
</dbReference>
<dbReference type="InterPro" id="IPR001304">
    <property type="entry name" value="C-type_lectin-like"/>
</dbReference>
<dbReference type="InterPro" id="IPR016186">
    <property type="entry name" value="C-type_lectin-like/link_sf"/>
</dbReference>
<dbReference type="InterPro" id="IPR050111">
    <property type="entry name" value="C-type_lectin/snaclec_domain"/>
</dbReference>
<dbReference type="InterPro" id="IPR018378">
    <property type="entry name" value="C-type_lectin_CS"/>
</dbReference>
<dbReference type="InterPro" id="IPR016187">
    <property type="entry name" value="CTDL_fold"/>
</dbReference>
<dbReference type="PANTHER" id="PTHR22803">
    <property type="entry name" value="MANNOSE, PHOSPHOLIPASE, LECTIN RECEPTOR RELATED"/>
    <property type="match status" value="1"/>
</dbReference>
<dbReference type="Pfam" id="PF00059">
    <property type="entry name" value="Lectin_C"/>
    <property type="match status" value="1"/>
</dbReference>
<dbReference type="PRINTS" id="PR01504">
    <property type="entry name" value="PNCREATITSAP"/>
</dbReference>
<dbReference type="SMART" id="SM00034">
    <property type="entry name" value="CLECT"/>
    <property type="match status" value="1"/>
</dbReference>
<dbReference type="SUPFAM" id="SSF56436">
    <property type="entry name" value="C-type lectin-like"/>
    <property type="match status" value="1"/>
</dbReference>
<dbReference type="PROSITE" id="PS00615">
    <property type="entry name" value="C_TYPE_LECTIN_1"/>
    <property type="match status" value="1"/>
</dbReference>
<dbReference type="PROSITE" id="PS50041">
    <property type="entry name" value="C_TYPE_LECTIN_2"/>
    <property type="match status" value="1"/>
</dbReference>
<name>LEC1_LEIMD</name>
<keyword id="KW-0106">Calcium</keyword>
<keyword id="KW-1015">Disulfide bond</keyword>
<keyword id="KW-0325">Glycoprotein</keyword>
<keyword id="KW-0430">Lectin</keyword>
<keyword id="KW-0479">Metal-binding</keyword>
<keyword id="KW-0964">Secreted</keyword>
<keyword id="KW-0732">Signal</keyword>
<protein>
    <recommendedName>
        <fullName>C-type lectin lectoxin-Lei1</fullName>
        <shortName>CTL</shortName>
    </recommendedName>
</protein>
<organism>
    <name type="scientific">Leioheterodon madagascariensis</name>
    <name type="common">Malagasy giant hognose snake</name>
    <name type="synonym">Heterodon madagascariensis</name>
    <dbReference type="NCBI Taxonomy" id="46577"/>
    <lineage>
        <taxon>Eukaryota</taxon>
        <taxon>Metazoa</taxon>
        <taxon>Chordata</taxon>
        <taxon>Craniata</taxon>
        <taxon>Vertebrata</taxon>
        <taxon>Euteleostomi</taxon>
        <taxon>Lepidosauria</taxon>
        <taxon>Squamata</taxon>
        <taxon>Bifurcata</taxon>
        <taxon>Unidentata</taxon>
        <taxon>Episquamata</taxon>
        <taxon>Toxicofera</taxon>
        <taxon>Serpentes</taxon>
        <taxon>Colubroidea</taxon>
        <taxon>Lamprophiidae</taxon>
        <taxon>Pseudoxyrhophiinae</taxon>
        <taxon>Leioheterodon</taxon>
    </lineage>
</organism>
<proteinExistence type="evidence at transcript level"/>
<comment type="function">
    <text evidence="1">Lectin which recognizes specific carbohydrate structures and agglutinates a variety of animal cells by binding to cell-surface glycoproteins and glycolipids. May be a calcium-dependent lectin (By similarity).</text>
</comment>
<comment type="subcellular location">
    <subcellularLocation>
        <location evidence="1">Secreted</location>
    </subcellularLocation>
</comment>
<comment type="tissue specificity">
    <text>Expressed by the venom gland.</text>
</comment>
<comment type="similarity">
    <text evidence="4">Belongs to the true venom lectin family.</text>
</comment>
<sequence>MRRFLFLSLGVLVVAFSLNGIGADHHCPWDWFSFDRFCYKVIKQRKNWQDAERFCGQLQNGSHLASIQSWAESKYVAMLLSNNAFLDTVWIGLFEPEKNRSLEWSDGSGFCYTGWERRKRNNVDNKKYCVELSWMSDYLEWNNVKCESRNIFICKI</sequence>